<gene>
    <name type="primary">GWT1</name>
    <name type="ordered locus">YJL091C</name>
    <name type="ORF">J0916</name>
</gene>
<protein>
    <recommendedName>
        <fullName>GPI-anchored wall transfer protein 1</fullName>
        <ecNumber>2.3.-.-</ecNumber>
    </recommendedName>
</protein>
<evidence type="ECO:0000255" key="1"/>
<evidence type="ECO:0000269" key="2">
    <source>
    </source>
</evidence>
<evidence type="ECO:0000269" key="3">
    <source>
    </source>
</evidence>
<evidence type="ECO:0000269" key="4">
    <source>
    </source>
</evidence>
<evidence type="ECO:0000269" key="5">
    <source>
    </source>
</evidence>
<evidence type="ECO:0000305" key="6"/>
<evidence type="ECO:0007829" key="7">
    <source>
        <dbReference type="PDB" id="8XIJ"/>
    </source>
</evidence>
<organism>
    <name type="scientific">Saccharomyces cerevisiae (strain ATCC 204508 / S288c)</name>
    <name type="common">Baker's yeast</name>
    <dbReference type="NCBI Taxonomy" id="559292"/>
    <lineage>
        <taxon>Eukaryota</taxon>
        <taxon>Fungi</taxon>
        <taxon>Dikarya</taxon>
        <taxon>Ascomycota</taxon>
        <taxon>Saccharomycotina</taxon>
        <taxon>Saccharomycetes</taxon>
        <taxon>Saccharomycetales</taxon>
        <taxon>Saccharomycetaceae</taxon>
        <taxon>Saccharomyces</taxon>
    </lineage>
</organism>
<name>GWT1_YEAST</name>
<accession>P47026</accession>
<accession>D6VW93</accession>
<dbReference type="EC" id="2.3.-.-"/>
<dbReference type="EMBL" id="Z49366">
    <property type="protein sequence ID" value="CAA89384.1"/>
    <property type="status" value="ALT_INIT"/>
    <property type="molecule type" value="Genomic_DNA"/>
</dbReference>
<dbReference type="EMBL" id="X83502">
    <property type="protein sequence ID" value="CAA58476.1"/>
    <property type="status" value="ALT_INIT"/>
    <property type="molecule type" value="Genomic_DNA"/>
</dbReference>
<dbReference type="EMBL" id="BK006943">
    <property type="protein sequence ID" value="DAA08709.1"/>
    <property type="molecule type" value="Genomic_DNA"/>
</dbReference>
<dbReference type="PIR" id="S56868">
    <property type="entry name" value="S56868"/>
</dbReference>
<dbReference type="RefSeq" id="NP_012444.2">
    <property type="nucleotide sequence ID" value="NM_001181524.1"/>
</dbReference>
<dbReference type="PDB" id="8XIJ">
    <property type="method" value="EM"/>
    <property type="resolution" value="3.37 A"/>
    <property type="chains" value="A=1-490"/>
</dbReference>
<dbReference type="PDB" id="8XIK">
    <property type="method" value="EM"/>
    <property type="resolution" value="3.55 A"/>
    <property type="chains" value="A=1-490"/>
</dbReference>
<dbReference type="PDBsum" id="8XIJ"/>
<dbReference type="PDBsum" id="8XIK"/>
<dbReference type="EMDB" id="EMD-38374"/>
<dbReference type="EMDB" id="EMD-38375"/>
<dbReference type="SMR" id="P47026"/>
<dbReference type="BioGRID" id="33666">
    <property type="interactions" value="459"/>
</dbReference>
<dbReference type="DIP" id="DIP-4481N"/>
<dbReference type="FunCoup" id="P47026">
    <property type="interactions" value="687"/>
</dbReference>
<dbReference type="IntAct" id="P47026">
    <property type="interactions" value="9"/>
</dbReference>
<dbReference type="MINT" id="P47026"/>
<dbReference type="STRING" id="4932.YJL091C"/>
<dbReference type="TCDB" id="9.B.315.1.5">
    <property type="family name" value="the glycoslyphosphatidylinositol (gpi) membrane anchoring protein gwt1 (gwt1) family"/>
</dbReference>
<dbReference type="PaxDb" id="4932-YJL091C"/>
<dbReference type="PeptideAtlas" id="P47026"/>
<dbReference type="EnsemblFungi" id="YJL091C_mRNA">
    <property type="protein sequence ID" value="YJL091C"/>
    <property type="gene ID" value="YJL091C"/>
</dbReference>
<dbReference type="GeneID" id="853354"/>
<dbReference type="KEGG" id="sce:YJL091C"/>
<dbReference type="AGR" id="SGD:S000003627"/>
<dbReference type="SGD" id="S000003627">
    <property type="gene designation" value="GWT1"/>
</dbReference>
<dbReference type="VEuPathDB" id="FungiDB:YJL091C"/>
<dbReference type="eggNOG" id="KOG0411">
    <property type="taxonomic scope" value="Eukaryota"/>
</dbReference>
<dbReference type="GeneTree" id="ENSGT00390000013520"/>
<dbReference type="HOGENOM" id="CLU_020802_2_2_1"/>
<dbReference type="InParanoid" id="P47026"/>
<dbReference type="OMA" id="GLYVMQP"/>
<dbReference type="OrthoDB" id="15270at2759"/>
<dbReference type="BioCyc" id="YEAST:G3O-31546-MONOMER"/>
<dbReference type="Reactome" id="R-SCE-162710">
    <property type="pathway name" value="Synthesis of glycosylphosphatidylinositol (GPI)"/>
</dbReference>
<dbReference type="UniPathway" id="UPA00196"/>
<dbReference type="BioGRID-ORCS" id="853354">
    <property type="hits" value="2 hits in 10 CRISPR screens"/>
</dbReference>
<dbReference type="PRO" id="PR:P47026"/>
<dbReference type="Proteomes" id="UP000002311">
    <property type="component" value="Chromosome X"/>
</dbReference>
<dbReference type="RNAct" id="P47026">
    <property type="molecule type" value="protein"/>
</dbReference>
<dbReference type="GO" id="GO:0005783">
    <property type="term" value="C:endoplasmic reticulum"/>
    <property type="evidence" value="ECO:0007005"/>
    <property type="project" value="SGD"/>
</dbReference>
<dbReference type="GO" id="GO:0005789">
    <property type="term" value="C:endoplasmic reticulum membrane"/>
    <property type="evidence" value="ECO:0007669"/>
    <property type="project" value="UniProtKB-SubCell"/>
</dbReference>
<dbReference type="GO" id="GO:0016020">
    <property type="term" value="C:membrane"/>
    <property type="evidence" value="ECO:0000314"/>
    <property type="project" value="SGD"/>
</dbReference>
<dbReference type="GO" id="GO:0042175">
    <property type="term" value="C:nuclear outer membrane-endoplasmic reticulum membrane network"/>
    <property type="evidence" value="ECO:0007005"/>
    <property type="project" value="SGD"/>
</dbReference>
<dbReference type="GO" id="GO:0032216">
    <property type="term" value="F:glucosaminyl-phosphatidylinositol O-acyltransferase activity"/>
    <property type="evidence" value="ECO:0000315"/>
    <property type="project" value="SGD"/>
</dbReference>
<dbReference type="GO" id="GO:0006506">
    <property type="term" value="P:GPI anchor biosynthetic process"/>
    <property type="evidence" value="ECO:0000314"/>
    <property type="project" value="SGD"/>
</dbReference>
<dbReference type="InterPro" id="IPR009447">
    <property type="entry name" value="PIGW/GWT1"/>
</dbReference>
<dbReference type="PANTHER" id="PTHR20661">
    <property type="entry name" value="PHOSPHATIDYLINOSITOL-GLYCAN BIOSYNTHESIS CLASS W PROTEIN"/>
    <property type="match status" value="1"/>
</dbReference>
<dbReference type="PANTHER" id="PTHR20661:SF0">
    <property type="entry name" value="PHOSPHATIDYLINOSITOL-GLYCAN BIOSYNTHESIS CLASS W PROTEIN"/>
    <property type="match status" value="1"/>
</dbReference>
<dbReference type="Pfam" id="PF06423">
    <property type="entry name" value="GWT1"/>
    <property type="match status" value="1"/>
</dbReference>
<dbReference type="PIRSF" id="PIRSF017321">
    <property type="entry name" value="GWT1"/>
    <property type="match status" value="1"/>
</dbReference>
<proteinExistence type="evidence at protein level"/>
<comment type="function">
    <text evidence="2 3">Probable acetyltransferase, which acetylates the inositol ring of phosphatidylinositol during biosynthesis of GPI-anchor. Acetylation during GPI-anchor biosynthesis is not essential for the subsequent mannosylation and is usually removed soon after the attachment of GPIs to proteins.</text>
</comment>
<comment type="pathway">
    <text>Glycolipid biosynthesis; glycosylphosphatidylinositol-anchor biosynthesis.</text>
</comment>
<comment type="subcellular location">
    <subcellularLocation>
        <location evidence="2 4">Endoplasmic reticulum membrane</location>
        <topology evidence="2 4">Multi-pass membrane protein</topology>
    </subcellularLocation>
</comment>
<comment type="miscellaneous">
    <text>Target of the antifungal compound 1-[4-butylbenzyl]isoquinoline that inhibits cell wall localization of GPI-anchored mannoproteins.</text>
</comment>
<comment type="similarity">
    <text evidence="6">Belongs to the PIGW family.</text>
</comment>
<comment type="sequence caution" evidence="6">
    <conflict type="erroneous initiation">
        <sequence resource="EMBL-CDS" id="CAA58476"/>
    </conflict>
</comment>
<comment type="sequence caution" evidence="6">
    <conflict type="erroneous initiation">
        <sequence resource="EMBL-CDS" id="CAA89384"/>
    </conflict>
</comment>
<feature type="chain" id="PRO_0000215188" description="GPI-anchored wall transfer protein 1">
    <location>
        <begin position="1"/>
        <end position="490"/>
    </location>
</feature>
<feature type="topological domain" description="Lumenal" evidence="1">
    <location>
        <begin position="1"/>
        <end position="19"/>
    </location>
</feature>
<feature type="transmembrane region" description="Helical" evidence="1">
    <location>
        <begin position="20"/>
        <end position="40"/>
    </location>
</feature>
<feature type="topological domain" description="Cytoplasmic" evidence="1">
    <location>
        <begin position="41"/>
        <end position="54"/>
    </location>
</feature>
<feature type="transmembrane region" description="Helical" evidence="1">
    <location>
        <begin position="55"/>
        <end position="75"/>
    </location>
</feature>
<feature type="topological domain" description="Lumenal" evidence="1">
    <location>
        <position position="76"/>
    </location>
</feature>
<feature type="transmembrane region" description="Helical" evidence="1">
    <location>
        <begin position="77"/>
        <end position="97"/>
    </location>
</feature>
<feature type="topological domain" description="Cytoplasmic" evidence="1">
    <location>
        <begin position="98"/>
        <end position="128"/>
    </location>
</feature>
<feature type="transmembrane region" description="Helical" evidence="1">
    <location>
        <begin position="129"/>
        <end position="149"/>
    </location>
</feature>
<feature type="topological domain" description="Lumenal" evidence="1">
    <location>
        <begin position="150"/>
        <end position="157"/>
    </location>
</feature>
<feature type="transmembrane region" description="Helical" evidence="1">
    <location>
        <begin position="158"/>
        <end position="178"/>
    </location>
</feature>
<feature type="topological domain" description="Cytoplasmic" evidence="1">
    <location>
        <begin position="179"/>
        <end position="199"/>
    </location>
</feature>
<feature type="transmembrane region" description="Helical" evidence="1">
    <location>
        <begin position="200"/>
        <end position="220"/>
    </location>
</feature>
<feature type="topological domain" description="Lumenal" evidence="1">
    <location>
        <begin position="221"/>
        <end position="231"/>
    </location>
</feature>
<feature type="transmembrane region" description="Helical" evidence="1">
    <location>
        <begin position="232"/>
        <end position="252"/>
    </location>
</feature>
<feature type="topological domain" description="Cytoplasmic" evidence="1">
    <location>
        <begin position="253"/>
        <end position="257"/>
    </location>
</feature>
<feature type="transmembrane region" description="Helical" evidence="1">
    <location>
        <begin position="258"/>
        <end position="278"/>
    </location>
</feature>
<feature type="topological domain" description="Lumenal" evidence="1">
    <location>
        <begin position="279"/>
        <end position="301"/>
    </location>
</feature>
<feature type="transmembrane region" description="Helical" evidence="1">
    <location>
        <begin position="302"/>
        <end position="322"/>
    </location>
</feature>
<feature type="topological domain" description="Cytoplasmic" evidence="1">
    <location>
        <begin position="323"/>
        <end position="356"/>
    </location>
</feature>
<feature type="transmembrane region" description="Helical" evidence="1">
    <location>
        <begin position="357"/>
        <end position="377"/>
    </location>
</feature>
<feature type="topological domain" description="Lumenal" evidence="1">
    <location>
        <begin position="378"/>
        <end position="390"/>
    </location>
</feature>
<feature type="transmembrane region" description="Helical" evidence="1">
    <location>
        <begin position="391"/>
        <end position="411"/>
    </location>
</feature>
<feature type="topological domain" description="Cytoplasmic" evidence="1">
    <location>
        <begin position="412"/>
        <end position="435"/>
    </location>
</feature>
<feature type="transmembrane region" description="Helical" evidence="1">
    <location>
        <begin position="436"/>
        <end position="456"/>
    </location>
</feature>
<feature type="topological domain" description="Lumenal" evidence="1">
    <location>
        <begin position="457"/>
        <end position="460"/>
    </location>
</feature>
<feature type="transmembrane region" description="Helical" evidence="1">
    <location>
        <begin position="461"/>
        <end position="481"/>
    </location>
</feature>
<feature type="topological domain" description="Cytoplasmic" evidence="1">
    <location>
        <begin position="482"/>
        <end position="490"/>
    </location>
</feature>
<feature type="mutagenesis site" description="In gwt1-10; impairs the transport of detergent-resistant microdomain-associated membrane proteins TAT2 and FUR4." evidence="5">
    <original>K</original>
    <variation>E</variation>
    <location>
        <position position="8"/>
    </location>
</feature>
<feature type="mutagenesis site" description="In gwt1-20; temperature sensitive mutant that induces a delay in export of GPI-anchored proteins." evidence="2">
    <original>WV</original>
    <variation>RA</variation>
    <location>
        <begin position="63"/>
        <end position="64"/>
    </location>
</feature>
<feature type="mutagenesis site" description="Resistant to the drug 1-[4-butylbenzyl]isoquinoline (BIQ)." evidence="3">
    <original>G</original>
    <variation>R</variation>
    <location>
        <position position="132"/>
    </location>
</feature>
<feature type="mutagenesis site" description="In gwt1-28; temperature sensitive mutant that induces a delay in export of GPI-anchored proteins; when associated with D-259." evidence="2">
    <original>L</original>
    <variation>P</variation>
    <location>
        <position position="209"/>
    </location>
</feature>
<feature type="mutagenesis site" description="In gwt1-28; temperature sensitive mutant that induces a delay in export of GPI-anchored proteins; when associated with P-209." evidence="2">
    <original>V</original>
    <variation>D</variation>
    <location>
        <position position="259"/>
    </location>
</feature>
<feature type="mutagenesis site" description="In gwt1-16; temperature sensitive mutant that induces a delay in export of GPI-anchored proteins; when associated with P-362 and A-479." evidence="2">
    <original>N</original>
    <variation>S</variation>
    <location>
        <position position="330"/>
    </location>
</feature>
<feature type="mutagenesis site" description="In gwt1-16; temperature sensitive mutant that induces a delay in export of GPI-anchored proteins; when associated with S-330 and A-479." evidence="2">
    <original>L</original>
    <variation>P</variation>
    <location>
        <position position="362"/>
    </location>
</feature>
<feature type="mutagenesis site" description="Resistant to the drug 1-[4-butylbenzyl]isoquinoline (BIQ)." evidence="3">
    <original>V</original>
    <variation>I</variation>
    <location>
        <position position="397"/>
    </location>
</feature>
<feature type="mutagenesis site" description="In gwt1-16; temperature sensitive mutant that induces a delay in export of GPI-anchored proteins; when associated with S-330 and P-362." evidence="2">
    <original>V</original>
    <variation>A</variation>
    <location>
        <position position="479"/>
    </location>
</feature>
<feature type="helix" evidence="7">
    <location>
        <begin position="20"/>
        <end position="27"/>
    </location>
</feature>
<feature type="helix" evidence="7">
    <location>
        <begin position="29"/>
        <end position="42"/>
    </location>
</feature>
<feature type="helix" evidence="7">
    <location>
        <begin position="52"/>
        <end position="71"/>
    </location>
</feature>
<feature type="helix" evidence="7">
    <location>
        <begin position="77"/>
        <end position="83"/>
    </location>
</feature>
<feature type="helix" evidence="7">
    <location>
        <begin position="85"/>
        <end position="98"/>
    </location>
</feature>
<feature type="helix" evidence="7">
    <location>
        <begin position="110"/>
        <end position="115"/>
    </location>
</feature>
<feature type="helix" evidence="7">
    <location>
        <begin position="124"/>
        <end position="143"/>
    </location>
</feature>
<feature type="helix" evidence="7">
    <location>
        <begin position="151"/>
        <end position="153"/>
    </location>
</feature>
<feature type="strand" evidence="7">
    <location>
        <begin position="157"/>
        <end position="159"/>
    </location>
</feature>
<feature type="helix" evidence="7">
    <location>
        <begin position="167"/>
        <end position="178"/>
    </location>
</feature>
<feature type="helix" evidence="7">
    <location>
        <begin position="181"/>
        <end position="188"/>
    </location>
</feature>
<feature type="helix" evidence="7">
    <location>
        <begin position="195"/>
        <end position="223"/>
    </location>
</feature>
<feature type="turn" evidence="7">
    <location>
        <begin position="229"/>
        <end position="232"/>
    </location>
</feature>
<feature type="helix" evidence="7">
    <location>
        <begin position="238"/>
        <end position="250"/>
    </location>
</feature>
<feature type="helix" evidence="7">
    <location>
        <begin position="253"/>
        <end position="256"/>
    </location>
</feature>
<feature type="helix" evidence="7">
    <location>
        <begin position="262"/>
        <end position="277"/>
    </location>
</feature>
<feature type="helix" evidence="7">
    <location>
        <begin position="281"/>
        <end position="288"/>
    </location>
</feature>
<feature type="helix" evidence="7">
    <location>
        <begin position="294"/>
        <end position="297"/>
    </location>
</feature>
<feature type="helix" evidence="7">
    <location>
        <begin position="299"/>
        <end position="303"/>
    </location>
</feature>
<feature type="helix" evidence="7">
    <location>
        <begin position="305"/>
        <end position="318"/>
    </location>
</feature>
<feature type="strand" evidence="7">
    <location>
        <begin position="321"/>
        <end position="326"/>
    </location>
</feature>
<feature type="turn" evidence="7">
    <location>
        <begin position="329"/>
        <end position="333"/>
    </location>
</feature>
<feature type="turn" evidence="7">
    <location>
        <begin position="341"/>
        <end position="346"/>
    </location>
</feature>
<feature type="turn" evidence="7">
    <location>
        <begin position="349"/>
        <end position="353"/>
    </location>
</feature>
<feature type="helix" evidence="7">
    <location>
        <begin position="358"/>
        <end position="376"/>
    </location>
</feature>
<feature type="turn" evidence="7">
    <location>
        <begin position="377"/>
        <end position="379"/>
    </location>
</feature>
<feature type="turn" evidence="7">
    <location>
        <begin position="386"/>
        <end position="389"/>
    </location>
</feature>
<feature type="helix" evidence="7">
    <location>
        <begin position="391"/>
        <end position="415"/>
    </location>
</feature>
<feature type="helix" evidence="7">
    <location>
        <begin position="426"/>
        <end position="433"/>
    </location>
</feature>
<feature type="helix" evidence="7">
    <location>
        <begin position="435"/>
        <end position="452"/>
    </location>
</feature>
<feature type="helix" evidence="7">
    <location>
        <begin position="460"/>
        <end position="483"/>
    </location>
</feature>
<reference key="1">
    <citation type="journal article" date="1995" name="Yeast">
        <title>Sequence analysis of a 33.1 kb fragment from the left arm of Saccharomyces cerevisiae chromosome X, including putative proteins with leucine zippers, a fungal Zn(II)2-Cys6 binuclear cluster domain and a putative alpha 2-SCB-alpha 2 binding site.</title>
        <authorList>
            <person name="Miosga T."/>
            <person name="Schaaff-Gerstenschlaeger I."/>
            <person name="Chalwatzis N."/>
            <person name="Baur A."/>
            <person name="Boles E."/>
            <person name="Fournier C."/>
            <person name="Schmitt S."/>
            <person name="Velten C."/>
            <person name="Wilhelm N."/>
            <person name="Zimmermann F.K."/>
        </authorList>
    </citation>
    <scope>NUCLEOTIDE SEQUENCE [GENOMIC DNA]</scope>
    <source>
        <strain>ATCC 204508 / S288c</strain>
    </source>
</reference>
<reference key="2">
    <citation type="journal article" date="1996" name="EMBO J.">
        <title>Complete nucleotide sequence of Saccharomyces cerevisiae chromosome X.</title>
        <authorList>
            <person name="Galibert F."/>
            <person name="Alexandraki D."/>
            <person name="Baur A."/>
            <person name="Boles E."/>
            <person name="Chalwatzis N."/>
            <person name="Chuat J.-C."/>
            <person name="Coster F."/>
            <person name="Cziepluch C."/>
            <person name="de Haan M."/>
            <person name="Domdey H."/>
            <person name="Durand P."/>
            <person name="Entian K.-D."/>
            <person name="Gatius M."/>
            <person name="Goffeau A."/>
            <person name="Grivell L.A."/>
            <person name="Hennemann A."/>
            <person name="Herbert C.J."/>
            <person name="Heumann K."/>
            <person name="Hilger F."/>
            <person name="Hollenberg C.P."/>
            <person name="Huang M.-E."/>
            <person name="Jacq C."/>
            <person name="Jauniaux J.-C."/>
            <person name="Katsoulou C."/>
            <person name="Kirchrath L."/>
            <person name="Kleine K."/>
            <person name="Kordes E."/>
            <person name="Koetter P."/>
            <person name="Liebl S."/>
            <person name="Louis E.J."/>
            <person name="Manus V."/>
            <person name="Mewes H.-W."/>
            <person name="Miosga T."/>
            <person name="Obermaier B."/>
            <person name="Perea J."/>
            <person name="Pohl T.M."/>
            <person name="Portetelle D."/>
            <person name="Pujol A."/>
            <person name="Purnelle B."/>
            <person name="Ramezani Rad M."/>
            <person name="Rasmussen S.W."/>
            <person name="Rose M."/>
            <person name="Rossau R."/>
            <person name="Schaaff-Gerstenschlaeger I."/>
            <person name="Smits P.H.M."/>
            <person name="Scarcez T."/>
            <person name="Soriano N."/>
            <person name="To Van D."/>
            <person name="Tzermia M."/>
            <person name="Van Broekhoven A."/>
            <person name="Vandenbol M."/>
            <person name="Wedler H."/>
            <person name="von Wettstein D."/>
            <person name="Wambutt R."/>
            <person name="Zagulski M."/>
            <person name="Zollner A."/>
            <person name="Karpfinger-Hartl L."/>
        </authorList>
    </citation>
    <scope>NUCLEOTIDE SEQUENCE [LARGE SCALE GENOMIC DNA]</scope>
    <source>
        <strain>ATCC 204508 / S288c</strain>
    </source>
</reference>
<reference key="3">
    <citation type="journal article" date="2014" name="G3 (Bethesda)">
        <title>The reference genome sequence of Saccharomyces cerevisiae: Then and now.</title>
        <authorList>
            <person name="Engel S.R."/>
            <person name="Dietrich F.S."/>
            <person name="Fisk D.G."/>
            <person name="Binkley G."/>
            <person name="Balakrishnan R."/>
            <person name="Costanzo M.C."/>
            <person name="Dwight S.S."/>
            <person name="Hitz B.C."/>
            <person name="Karra K."/>
            <person name="Nash R.S."/>
            <person name="Weng S."/>
            <person name="Wong E.D."/>
            <person name="Lloyd P."/>
            <person name="Skrzypek M.S."/>
            <person name="Miyasato S.R."/>
            <person name="Simison M."/>
            <person name="Cherry J.M."/>
        </authorList>
    </citation>
    <scope>GENOME REANNOTATION</scope>
    <source>
        <strain>ATCC 204508 / S288c</strain>
    </source>
</reference>
<reference key="4">
    <citation type="journal article" date="2003" name="J. Biol. Chem.">
        <title>GWT1 gene is required for inositol acylation of glycosylphosphatidylinositol anchors in yeast.</title>
        <authorList>
            <person name="Umemura M."/>
            <person name="Okamoto M."/>
            <person name="Nakayama K."/>
            <person name="Sagane K."/>
            <person name="Tsukahara K."/>
            <person name="Hata K."/>
            <person name="Jigami Y."/>
        </authorList>
    </citation>
    <scope>FUNCTION</scope>
    <scope>SUBCELLULAR LOCATION</scope>
    <scope>MUTAGENESIS OF 63-TRP-VAL-64; LEU-209; VAL-259; ASN-330; LEU-362 AND VAL-479</scope>
</reference>
<reference key="5">
    <citation type="journal article" date="2003" name="Mol. Cell">
        <title>Assigning function to yeast proteins by integration of technologies.</title>
        <authorList>
            <person name="Hazbun T.R."/>
            <person name="Malmstroem L."/>
            <person name="Anderson S."/>
            <person name="Graczyk B.J."/>
            <person name="Fox B."/>
            <person name="Riffle M."/>
            <person name="Sundin B.A."/>
            <person name="Aranda J.D."/>
            <person name="McDonald W.H."/>
            <person name="Chiu C.-H."/>
            <person name="Snydsman B.E."/>
            <person name="Bradley P."/>
            <person name="Muller E.G.D."/>
            <person name="Fields S."/>
            <person name="Baker D."/>
            <person name="Yates J.R. III"/>
            <person name="Davis T.N."/>
        </authorList>
    </citation>
    <scope>IDENTIFICATION BY MASS SPECTROMETRY</scope>
</reference>
<reference key="6">
    <citation type="journal article" date="2003" name="Mol. Microbiol.">
        <title>Medicinal genetics approach towards identifying the molecular target of a novel inhibitor of fungal cell wall assembly.</title>
        <authorList>
            <person name="Tsukahara K."/>
            <person name="Hata K."/>
            <person name="Nakamoto K."/>
            <person name="Sagane K."/>
            <person name="Watanabe N.-A."/>
            <person name="Kuromitsu J."/>
            <person name="Kai J."/>
            <person name="Tsuchiya M."/>
            <person name="Ohba F."/>
            <person name="Jigami Y."/>
            <person name="Yoshimatsu K."/>
            <person name="Nagasu T."/>
        </authorList>
    </citation>
    <scope>FUNCTION</scope>
    <scope>MUTAGENESIS OF GLY-132 AND VAL-397</scope>
</reference>
<reference key="7">
    <citation type="journal article" date="2003" name="Nature">
        <title>Global analysis of protein localization in budding yeast.</title>
        <authorList>
            <person name="Huh W.-K."/>
            <person name="Falvo J.V."/>
            <person name="Gerke L.C."/>
            <person name="Carroll A.S."/>
            <person name="Howson R.W."/>
            <person name="Weissman J.S."/>
            <person name="O'Shea E.K."/>
        </authorList>
    </citation>
    <scope>SUBCELLULAR LOCATION [LARGE SCALE ANALYSIS]</scope>
</reference>
<reference key="8">
    <citation type="journal article" date="2006" name="J. Biol. Chem.">
        <title>Glycosylphosphatidylinositol-anchored proteins are required for the transport of detergent-resistant microdomain-associated membrane proteins Tat2p and Fur4p.</title>
        <authorList>
            <person name="Okamoto M."/>
            <person name="Yoko-o T."/>
            <person name="Umemura M."/>
            <person name="Nakayama K."/>
            <person name="Jigami Y."/>
        </authorList>
    </citation>
    <scope>MUTAGENESIS OF LYS-8</scope>
</reference>
<reference key="9">
    <citation type="journal article" date="2006" name="Proc. Natl. Acad. Sci. U.S.A.">
        <title>A global topology map of the Saccharomyces cerevisiae membrane proteome.</title>
        <authorList>
            <person name="Kim H."/>
            <person name="Melen K."/>
            <person name="Oesterberg M."/>
            <person name="von Heijne G."/>
        </authorList>
    </citation>
    <scope>TOPOLOGY [LARGE SCALE ANALYSIS]</scope>
    <source>
        <strain>ATCC 208353 / W303-1A</strain>
    </source>
</reference>
<keyword id="KW-0002">3D-structure</keyword>
<keyword id="KW-0012">Acyltransferase</keyword>
<keyword id="KW-0256">Endoplasmic reticulum</keyword>
<keyword id="KW-0337">GPI-anchor biosynthesis</keyword>
<keyword id="KW-0472">Membrane</keyword>
<keyword id="KW-1185">Reference proteome</keyword>
<keyword id="KW-0808">Transferase</keyword>
<keyword id="KW-0812">Transmembrane</keyword>
<keyword id="KW-1133">Transmembrane helix</keyword>
<sequence length="490" mass="55466">MSTLKQRKEDFVTGLNGGSITEINAVTSIALVTYISWNLLKNSNLMPPGISSVQYIIDFALNWVALLLSITIYASEPYLLNTLILLPCLLAFIYGKFTSSSKPSNPIYNKKKMITQRFQLEKKPYITAYRGGMLILTAIAILAVDFPIFPRRFAKVETWGTSLMDLGVGSFVFSNGIVSSRALLKNLSLKSKPSFLKNAFNALKSGGTLLFLGLLRLFFVKNLEYQEHVTEYGVHWNFFITLSLLPLVLTFIDPVTRMVPRCSIAIFISCIYEWLLLKDDRTLNFLILADRNCFFSANREGIFSFLGYCSIFLWGQNTGFYLLGNKPTLNNLYKPSTQDVVAASKKSSTWDYWTSVTPLSGLCIWSTIFLVISQLVFQYHPYSVSRRFANLPYTLWVITYNLLFLTGYCLTDKIFGNSSEYYKVAECLESINSNGLFLFLLANVSTGLVNMSMVTIDSSPLKSFLVLLAYCSFIAVISVFLYRKRIFIKL</sequence>